<feature type="chain" id="PRO_1000089228" description="Endoribonuclease YbeY">
    <location>
        <begin position="1"/>
        <end position="161"/>
    </location>
</feature>
<feature type="binding site" evidence="1">
    <location>
        <position position="121"/>
    </location>
    <ligand>
        <name>Zn(2+)</name>
        <dbReference type="ChEBI" id="CHEBI:29105"/>
        <note>catalytic</note>
    </ligand>
</feature>
<feature type="binding site" evidence="1">
    <location>
        <position position="125"/>
    </location>
    <ligand>
        <name>Zn(2+)</name>
        <dbReference type="ChEBI" id="CHEBI:29105"/>
        <note>catalytic</note>
    </ligand>
</feature>
<feature type="binding site" evidence="1">
    <location>
        <position position="131"/>
    </location>
    <ligand>
        <name>Zn(2+)</name>
        <dbReference type="ChEBI" id="CHEBI:29105"/>
        <note>catalytic</note>
    </ligand>
</feature>
<name>YBEY_XANCB</name>
<evidence type="ECO:0000255" key="1">
    <source>
        <dbReference type="HAMAP-Rule" id="MF_00009"/>
    </source>
</evidence>
<dbReference type="EC" id="3.1.-.-" evidence="1"/>
<dbReference type="EMBL" id="AM920689">
    <property type="protein sequence ID" value="CAP51194.1"/>
    <property type="molecule type" value="Genomic_DNA"/>
</dbReference>
<dbReference type="SMR" id="B0RRV9"/>
<dbReference type="KEGG" id="xca:xcc-b100_1841"/>
<dbReference type="HOGENOM" id="CLU_106710_0_1_6"/>
<dbReference type="Proteomes" id="UP000001188">
    <property type="component" value="Chromosome"/>
</dbReference>
<dbReference type="GO" id="GO:0005737">
    <property type="term" value="C:cytoplasm"/>
    <property type="evidence" value="ECO:0007669"/>
    <property type="project" value="UniProtKB-SubCell"/>
</dbReference>
<dbReference type="GO" id="GO:0004222">
    <property type="term" value="F:metalloendopeptidase activity"/>
    <property type="evidence" value="ECO:0007669"/>
    <property type="project" value="InterPro"/>
</dbReference>
<dbReference type="GO" id="GO:0004521">
    <property type="term" value="F:RNA endonuclease activity"/>
    <property type="evidence" value="ECO:0007669"/>
    <property type="project" value="UniProtKB-UniRule"/>
</dbReference>
<dbReference type="GO" id="GO:0008270">
    <property type="term" value="F:zinc ion binding"/>
    <property type="evidence" value="ECO:0007669"/>
    <property type="project" value="UniProtKB-UniRule"/>
</dbReference>
<dbReference type="GO" id="GO:0006364">
    <property type="term" value="P:rRNA processing"/>
    <property type="evidence" value="ECO:0007669"/>
    <property type="project" value="UniProtKB-UniRule"/>
</dbReference>
<dbReference type="Gene3D" id="3.40.390.30">
    <property type="entry name" value="Metalloproteases ('zincins'), catalytic domain"/>
    <property type="match status" value="1"/>
</dbReference>
<dbReference type="HAMAP" id="MF_00009">
    <property type="entry name" value="Endoribonucl_YbeY"/>
    <property type="match status" value="1"/>
</dbReference>
<dbReference type="InterPro" id="IPR023091">
    <property type="entry name" value="MetalPrtase_cat_dom_sf_prd"/>
</dbReference>
<dbReference type="InterPro" id="IPR002036">
    <property type="entry name" value="YbeY"/>
</dbReference>
<dbReference type="InterPro" id="IPR020549">
    <property type="entry name" value="YbeY_CS"/>
</dbReference>
<dbReference type="NCBIfam" id="TIGR00043">
    <property type="entry name" value="rRNA maturation RNase YbeY"/>
    <property type="match status" value="1"/>
</dbReference>
<dbReference type="PANTHER" id="PTHR46986">
    <property type="entry name" value="ENDORIBONUCLEASE YBEY, CHLOROPLASTIC"/>
    <property type="match status" value="1"/>
</dbReference>
<dbReference type="PANTHER" id="PTHR46986:SF1">
    <property type="entry name" value="ENDORIBONUCLEASE YBEY, CHLOROPLASTIC"/>
    <property type="match status" value="1"/>
</dbReference>
<dbReference type="Pfam" id="PF02130">
    <property type="entry name" value="YbeY"/>
    <property type="match status" value="1"/>
</dbReference>
<dbReference type="SUPFAM" id="SSF55486">
    <property type="entry name" value="Metalloproteases ('zincins'), catalytic domain"/>
    <property type="match status" value="1"/>
</dbReference>
<dbReference type="PROSITE" id="PS01306">
    <property type="entry name" value="UPF0054"/>
    <property type="match status" value="1"/>
</dbReference>
<protein>
    <recommendedName>
        <fullName evidence="1">Endoribonuclease YbeY</fullName>
        <ecNumber evidence="1">3.1.-.-</ecNumber>
    </recommendedName>
</protein>
<reference key="1">
    <citation type="journal article" date="2008" name="J. Biotechnol.">
        <title>The genome of Xanthomonas campestris pv. campestris B100 and its use for the reconstruction of metabolic pathways involved in xanthan biosynthesis.</title>
        <authorList>
            <person name="Vorhoelter F.-J."/>
            <person name="Schneiker S."/>
            <person name="Goesmann A."/>
            <person name="Krause L."/>
            <person name="Bekel T."/>
            <person name="Kaiser O."/>
            <person name="Linke B."/>
            <person name="Patschkowski T."/>
            <person name="Rueckert C."/>
            <person name="Schmid J."/>
            <person name="Sidhu V.K."/>
            <person name="Sieber V."/>
            <person name="Tauch A."/>
            <person name="Watt S.A."/>
            <person name="Weisshaar B."/>
            <person name="Becker A."/>
            <person name="Niehaus K."/>
            <person name="Puehler A."/>
        </authorList>
    </citation>
    <scope>NUCLEOTIDE SEQUENCE [LARGE SCALE GENOMIC DNA]</scope>
    <source>
        <strain>B100</strain>
    </source>
</reference>
<sequence length="161" mass="17609">MTKGPVRLDVGVSYALPRTGLPSSVSFRKWVAAALKGRIREADLAVRVVDEKEGCSLNHHYRGKDYATNVLSFPAEMPQGLPKGVKMPLLGDLVICAPVVAREAAEQGKSLSAHYAHLTVHGTLHLLGWDHEDDKEADAMEQLEREILAELGIDDPYAGER</sequence>
<keyword id="KW-0963">Cytoplasm</keyword>
<keyword id="KW-0255">Endonuclease</keyword>
<keyword id="KW-0378">Hydrolase</keyword>
<keyword id="KW-0479">Metal-binding</keyword>
<keyword id="KW-0540">Nuclease</keyword>
<keyword id="KW-0690">Ribosome biogenesis</keyword>
<keyword id="KW-0698">rRNA processing</keyword>
<keyword id="KW-0862">Zinc</keyword>
<gene>
    <name evidence="1" type="primary">ybeY</name>
    <name type="ordered locus">xcc-b100_1841</name>
</gene>
<accession>B0RRV9</accession>
<proteinExistence type="inferred from homology"/>
<organism>
    <name type="scientific">Xanthomonas campestris pv. campestris (strain B100)</name>
    <dbReference type="NCBI Taxonomy" id="509169"/>
    <lineage>
        <taxon>Bacteria</taxon>
        <taxon>Pseudomonadati</taxon>
        <taxon>Pseudomonadota</taxon>
        <taxon>Gammaproteobacteria</taxon>
        <taxon>Lysobacterales</taxon>
        <taxon>Lysobacteraceae</taxon>
        <taxon>Xanthomonas</taxon>
    </lineage>
</organism>
<comment type="function">
    <text evidence="1">Single strand-specific metallo-endoribonuclease involved in late-stage 70S ribosome quality control and in maturation of the 3' terminus of the 16S rRNA.</text>
</comment>
<comment type="cofactor">
    <cofactor evidence="1">
        <name>Zn(2+)</name>
        <dbReference type="ChEBI" id="CHEBI:29105"/>
    </cofactor>
    <text evidence="1">Binds 1 zinc ion.</text>
</comment>
<comment type="subcellular location">
    <subcellularLocation>
        <location evidence="1">Cytoplasm</location>
    </subcellularLocation>
</comment>
<comment type="similarity">
    <text evidence="1">Belongs to the endoribonuclease YbeY family.</text>
</comment>